<reference key="1">
    <citation type="journal article" date="1992" name="J. Bacteriol.">
        <title>Cloning, nucleotide sequences, and enzymatic properties of glucose dehydrogenase isozymes from Bacillus megaterium IAM1030.</title>
        <authorList>
            <person name="Nagao T."/>
            <person name="Mitamura T."/>
            <person name="Wang X.H."/>
            <person name="Negoro S."/>
            <person name="Yomo T."/>
            <person name="Urabe I."/>
            <person name="Okada H."/>
        </authorList>
    </citation>
    <scope>NUCLEOTIDE SEQUENCE [GENOMIC DNA]</scope>
    <source>
        <strain>IAM 1030 / JCM 20016</strain>
    </source>
</reference>
<comment type="catalytic activity">
    <reaction>
        <text>D-glucose + NAD(+) = D-glucono-1,5-lactone + NADH + H(+)</text>
        <dbReference type="Rhea" id="RHEA:14293"/>
        <dbReference type="ChEBI" id="CHEBI:4167"/>
        <dbReference type="ChEBI" id="CHEBI:15378"/>
        <dbReference type="ChEBI" id="CHEBI:16217"/>
        <dbReference type="ChEBI" id="CHEBI:57540"/>
        <dbReference type="ChEBI" id="CHEBI:57945"/>
        <dbReference type="EC" id="1.1.1.47"/>
    </reaction>
</comment>
<comment type="catalytic activity">
    <reaction>
        <text>D-glucose + NADP(+) = D-glucono-1,5-lactone + NADPH + H(+)</text>
        <dbReference type="Rhea" id="RHEA:14405"/>
        <dbReference type="ChEBI" id="CHEBI:4167"/>
        <dbReference type="ChEBI" id="CHEBI:15378"/>
        <dbReference type="ChEBI" id="CHEBI:16217"/>
        <dbReference type="ChEBI" id="CHEBI:57783"/>
        <dbReference type="ChEBI" id="CHEBI:58349"/>
        <dbReference type="EC" id="1.1.1.47"/>
    </reaction>
</comment>
<comment type="subunit">
    <text>Homotetramer.</text>
</comment>
<comment type="interaction">
    <interactant intactId="EBI-7977646">
        <id>P39485</id>
    </interactant>
    <interactant intactId="EBI-7977646">
        <id>P39485</id>
        <label>gdhIV</label>
    </interactant>
    <organismsDiffer>false</organismsDiffer>
    <experiments>2</experiments>
</comment>
<comment type="miscellaneous">
    <text>Prefers NAD to NADP; 2M NaCl enhances its pH and thermostability.</text>
</comment>
<comment type="similarity">
    <text evidence="3">Belongs to the short-chain dehydrogenases/reductases (SDR) family.</text>
</comment>
<proteinExistence type="evidence at protein level"/>
<gene>
    <name type="primary">gdhIV</name>
</gene>
<organism>
    <name type="scientific">Priestia megaterium</name>
    <name type="common">Bacillus megaterium</name>
    <dbReference type="NCBI Taxonomy" id="1404"/>
    <lineage>
        <taxon>Bacteria</taxon>
        <taxon>Bacillati</taxon>
        <taxon>Bacillota</taxon>
        <taxon>Bacilli</taxon>
        <taxon>Bacillales</taxon>
        <taxon>Bacillaceae</taxon>
        <taxon>Priestia</taxon>
    </lineage>
</organism>
<evidence type="ECO:0000250" key="1"/>
<evidence type="ECO:0000255" key="2">
    <source>
        <dbReference type="PROSITE-ProRule" id="PRU10001"/>
    </source>
</evidence>
<evidence type="ECO:0000305" key="3"/>
<evidence type="ECO:0007829" key="4">
    <source>
        <dbReference type="PDB" id="3AY6"/>
    </source>
</evidence>
<evidence type="ECO:0007829" key="5">
    <source>
        <dbReference type="PDB" id="3AY7"/>
    </source>
</evidence>
<dbReference type="EC" id="1.1.1.47"/>
<dbReference type="EMBL" id="D10626">
    <property type="protein sequence ID" value="BAA01476.1"/>
    <property type="molecule type" value="Genomic_DNA"/>
</dbReference>
<dbReference type="PIR" id="I40225">
    <property type="entry name" value="I40225"/>
</dbReference>
<dbReference type="PDB" id="3AUS">
    <property type="method" value="X-ray"/>
    <property type="resolution" value="2.00 A"/>
    <property type="chains" value="A/B=1-261"/>
</dbReference>
<dbReference type="PDB" id="3AUT">
    <property type="method" value="X-ray"/>
    <property type="resolution" value="2.00 A"/>
    <property type="chains" value="A/B=1-261"/>
</dbReference>
<dbReference type="PDB" id="3AUU">
    <property type="method" value="X-ray"/>
    <property type="resolution" value="2.00 A"/>
    <property type="chains" value="A/B=1-261"/>
</dbReference>
<dbReference type="PDB" id="3AY6">
    <property type="method" value="X-ray"/>
    <property type="resolution" value="2.10 A"/>
    <property type="chains" value="A/B/C/D=1-261"/>
</dbReference>
<dbReference type="PDB" id="3AY7">
    <property type="method" value="X-ray"/>
    <property type="resolution" value="1.90 A"/>
    <property type="chains" value="A/B=1-261"/>
</dbReference>
<dbReference type="PDBsum" id="3AUS"/>
<dbReference type="PDBsum" id="3AUT"/>
<dbReference type="PDBsum" id="3AUU"/>
<dbReference type="PDBsum" id="3AY6"/>
<dbReference type="PDBsum" id="3AY7"/>
<dbReference type="SMR" id="P39485"/>
<dbReference type="MINT" id="P39485"/>
<dbReference type="OMA" id="YKCSVQN"/>
<dbReference type="BRENDA" id="1.1.1.47">
    <property type="organism ID" value="656"/>
</dbReference>
<dbReference type="SABIO-RK" id="P39485"/>
<dbReference type="EvolutionaryTrace" id="P39485"/>
<dbReference type="GO" id="GO:0047934">
    <property type="term" value="F:glucose 1-dehydrogenase (NAD+) activity"/>
    <property type="evidence" value="ECO:0007669"/>
    <property type="project" value="RHEA"/>
</dbReference>
<dbReference type="GO" id="GO:0047935">
    <property type="term" value="F:glucose 1-dehydrogenase (NADP+) activity"/>
    <property type="evidence" value="ECO:0007669"/>
    <property type="project" value="RHEA"/>
</dbReference>
<dbReference type="GO" id="GO:0042802">
    <property type="term" value="F:identical protein binding"/>
    <property type="evidence" value="ECO:0000353"/>
    <property type="project" value="IntAct"/>
</dbReference>
<dbReference type="CDD" id="cd05358">
    <property type="entry name" value="GlcDH_SDR_c"/>
    <property type="match status" value="1"/>
</dbReference>
<dbReference type="FunFam" id="3.40.50.720:FF:000248">
    <property type="entry name" value="Glucose 1-dehydrogenase"/>
    <property type="match status" value="1"/>
</dbReference>
<dbReference type="Gene3D" id="3.40.50.720">
    <property type="entry name" value="NAD(P)-binding Rossmann-like Domain"/>
    <property type="match status" value="1"/>
</dbReference>
<dbReference type="InterPro" id="IPR036291">
    <property type="entry name" value="NAD(P)-bd_dom_sf"/>
</dbReference>
<dbReference type="InterPro" id="IPR020904">
    <property type="entry name" value="Sc_DH/Rdtase_CS"/>
</dbReference>
<dbReference type="InterPro" id="IPR002347">
    <property type="entry name" value="SDR_fam"/>
</dbReference>
<dbReference type="NCBIfam" id="NF005559">
    <property type="entry name" value="PRK07231.1"/>
    <property type="match status" value="1"/>
</dbReference>
<dbReference type="NCBIfam" id="NF006493">
    <property type="entry name" value="PRK08936.1"/>
    <property type="match status" value="1"/>
</dbReference>
<dbReference type="PANTHER" id="PTHR43639">
    <property type="entry name" value="OXIDOREDUCTASE, SHORT-CHAIN DEHYDROGENASE/REDUCTASE FAMILY (AFU_ORTHOLOGUE AFUA_5G02870)"/>
    <property type="match status" value="1"/>
</dbReference>
<dbReference type="PANTHER" id="PTHR43639:SF1">
    <property type="entry name" value="SHORT-CHAIN DEHYDROGENASE_REDUCTASE FAMILY PROTEIN"/>
    <property type="match status" value="1"/>
</dbReference>
<dbReference type="Pfam" id="PF13561">
    <property type="entry name" value="adh_short_C2"/>
    <property type="match status" value="1"/>
</dbReference>
<dbReference type="PRINTS" id="PR00081">
    <property type="entry name" value="GDHRDH"/>
</dbReference>
<dbReference type="PRINTS" id="PR00080">
    <property type="entry name" value="SDRFAMILY"/>
</dbReference>
<dbReference type="SUPFAM" id="SSF51735">
    <property type="entry name" value="NAD(P)-binding Rossmann-fold domains"/>
    <property type="match status" value="1"/>
</dbReference>
<dbReference type="PROSITE" id="PS00061">
    <property type="entry name" value="ADH_SHORT"/>
    <property type="match status" value="1"/>
</dbReference>
<name>DHG4_PRIMG</name>
<protein>
    <recommendedName>
        <fullName>Glucose 1-dehydrogenase 4</fullName>
        <ecNumber>1.1.1.47</ecNumber>
    </recommendedName>
    <alternativeName>
        <fullName>GLCDH-IV</fullName>
    </alternativeName>
</protein>
<accession>P39485</accession>
<feature type="chain" id="PRO_0000054612" description="Glucose 1-dehydrogenase 4">
    <location>
        <begin position="1"/>
        <end position="261"/>
    </location>
</feature>
<feature type="active site" description="Proton acceptor" evidence="2">
    <location>
        <position position="158"/>
    </location>
</feature>
<feature type="binding site" evidence="1">
    <location>
        <begin position="11"/>
        <end position="35"/>
    </location>
    <ligand>
        <name>NAD(+)</name>
        <dbReference type="ChEBI" id="CHEBI:57540"/>
    </ligand>
</feature>
<feature type="binding site" evidence="1">
    <location>
        <position position="145"/>
    </location>
    <ligand>
        <name>substrate</name>
    </ligand>
</feature>
<feature type="helix" evidence="5">
    <location>
        <begin position="3"/>
        <end position="5"/>
    </location>
</feature>
<feature type="strand" evidence="5">
    <location>
        <begin position="9"/>
        <end position="12"/>
    </location>
</feature>
<feature type="turn" evidence="5">
    <location>
        <begin position="13"/>
        <end position="16"/>
    </location>
</feature>
<feature type="helix" evidence="5">
    <location>
        <begin position="18"/>
        <end position="29"/>
    </location>
</feature>
<feature type="strand" evidence="5">
    <location>
        <begin position="33"/>
        <end position="40"/>
    </location>
</feature>
<feature type="helix" evidence="5">
    <location>
        <begin position="42"/>
        <end position="55"/>
    </location>
</feature>
<feature type="strand" evidence="5">
    <location>
        <begin position="58"/>
        <end position="63"/>
    </location>
</feature>
<feature type="helix" evidence="5">
    <location>
        <begin position="69"/>
        <end position="83"/>
    </location>
</feature>
<feature type="strand" evidence="5">
    <location>
        <begin position="88"/>
        <end position="91"/>
    </location>
</feature>
<feature type="helix" evidence="5">
    <location>
        <begin position="101"/>
        <end position="103"/>
    </location>
</feature>
<feature type="helix" evidence="5">
    <location>
        <begin position="106"/>
        <end position="116"/>
    </location>
</feature>
<feature type="helix" evidence="5">
    <location>
        <begin position="118"/>
        <end position="133"/>
    </location>
</feature>
<feature type="strand" evidence="5">
    <location>
        <begin position="139"/>
        <end position="143"/>
    </location>
</feature>
<feature type="helix" evidence="5">
    <location>
        <begin position="146"/>
        <end position="148"/>
    </location>
</feature>
<feature type="helix" evidence="5">
    <location>
        <begin position="156"/>
        <end position="176"/>
    </location>
</feature>
<feature type="helix" evidence="5">
    <location>
        <begin position="177"/>
        <end position="179"/>
    </location>
</feature>
<feature type="strand" evidence="5">
    <location>
        <begin position="182"/>
        <end position="188"/>
    </location>
</feature>
<feature type="strand" evidence="4">
    <location>
        <begin position="190"/>
        <end position="193"/>
    </location>
</feature>
<feature type="helix" evidence="5">
    <location>
        <begin position="194"/>
        <end position="196"/>
    </location>
</feature>
<feature type="helix" evidence="5">
    <location>
        <begin position="197"/>
        <end position="201"/>
    </location>
</feature>
<feature type="helix" evidence="5">
    <location>
        <begin position="203"/>
        <end position="211"/>
    </location>
</feature>
<feature type="helix" evidence="5">
    <location>
        <begin position="221"/>
        <end position="232"/>
    </location>
</feature>
<feature type="helix" evidence="5">
    <location>
        <begin position="234"/>
        <end position="236"/>
    </location>
</feature>
<feature type="strand" evidence="5">
    <location>
        <begin position="243"/>
        <end position="247"/>
    </location>
</feature>
<feature type="helix" evidence="5">
    <location>
        <begin position="250"/>
        <end position="252"/>
    </location>
</feature>
<feature type="helix" evidence="5">
    <location>
        <begin position="254"/>
        <end position="256"/>
    </location>
</feature>
<keyword id="KW-0002">3D-structure</keyword>
<keyword id="KW-0520">NAD</keyword>
<keyword id="KW-0560">Oxidoreductase</keyword>
<sequence length="261" mass="28157">MYTDLKDKVVVITGGSTGLGRAMAVRFGQEEAKVVINYYNNEEEALDAKKEVEEAGGQAIIVQGDVTKEEDVVNLVQTAIKEFGTLDVMINNAGVENPVPSHELSLDNWNKVIDTNLTGAFLGSREAIKYFVENDIKGNVINMSSVHEMIPWPLFVHYAASKGGMKLMTETLALEYAPKGIRVNNIGPGAMNTPINAEKFADPVQRADVESMIPMGYIGKPEEVAAVAAFLASSQASYVTGITLFADGGMTKYPSFQAGRG</sequence>